<gene>
    <name type="primary">Lgals3bp</name>
</gene>
<reference key="1">
    <citation type="journal article" date="2003" name="FEBS Lett.">
        <title>Human T-cell leukemia virus type 1 Tax protein stimulates the interferon-responsive enhancer element via NF-kappaB activity.</title>
        <authorList>
            <person name="Shimizu T."/>
            <person name="Kawakita S."/>
            <person name="Li Q.-H."/>
            <person name="Fukuhara S."/>
            <person name="Fujisawa J."/>
        </authorList>
    </citation>
    <scope>NUCLEOTIDE SEQUENCE [MRNA]</scope>
    <scope>INDUCTION</scope>
    <source>
        <strain>Fischer</strain>
        <tissue>Fibroblast</tissue>
    </source>
</reference>
<reference key="2">
    <citation type="journal article" date="2004" name="Endocrinology">
        <title>The 90K protein increases major histocompatibility complex class I expression and is regulated by hormones, gamma-interferon, and double-strand polynucleotides.</title>
        <authorList>
            <person name="Grassadonia A."/>
            <person name="Tinari N."/>
            <person name="Fiorentino B."/>
            <person name="Suzuki K."/>
            <person name="Nakazato M."/>
            <person name="De Tursi M."/>
            <person name="Giuliani C."/>
            <person name="Napolitano G."/>
            <person name="Singer D.S."/>
            <person name="Iacobelli S."/>
            <person name="Kohn L.D."/>
        </authorList>
    </citation>
    <scope>NUCLEOTIDE SEQUENCE [MRNA]</scope>
    <scope>SUBCELLULAR LOCATION</scope>
    <scope>TISSUE SPECIFICITY</scope>
    <scope>INDUCTION</scope>
    <source>
        <strain>Sprague-Dawley</strain>
        <tissue>Thyroid</tissue>
    </source>
</reference>
<reference key="3">
    <citation type="submission" date="2007-06" db="EMBL/GenBank/DDBJ databases">
        <authorList>
            <person name="Mural R.J."/>
            <person name="Adams M.D."/>
            <person name="Myers E.W."/>
            <person name="Smith H.O."/>
            <person name="Venter J.C."/>
        </authorList>
    </citation>
    <scope>NUCLEOTIDE SEQUENCE [LARGE SCALE GENOMIC DNA]</scope>
</reference>
<reference key="4">
    <citation type="journal article" date="2004" name="Genome Res.">
        <title>The status, quality, and expansion of the NIH full-length cDNA project: the Mammalian Gene Collection (MGC).</title>
        <authorList>
            <consortium name="The MGC Project Team"/>
        </authorList>
    </citation>
    <scope>NUCLEOTIDE SEQUENCE [LARGE SCALE MRNA]</scope>
    <source>
        <tissue>Lung</tissue>
    </source>
</reference>
<name>LG3BP_RAT</name>
<comment type="function">
    <text evidence="1">Promotes integrin-mediated cell adhesion. May stimulate host defense against viruses and tumor cells (By similarity).</text>
</comment>
<comment type="subunit">
    <text evidence="1">Homodimers and homomultimers. The multimers form ring-like structures with a diameter of 30-40 nm. Binds LGALS1 and LGALS3. Binds ITGB1, COL4A1, COL5A1, COL6A1, FN1 and NID (By similarity). The unglycosylated form interacts with PDE4DIP; this interaction, which is PDE4DIP isoform-specific, may connect a pericentrosomal complex to the gamma-tubulin ring complex (gamma-TuRC) to promote microtubule assembly and acetylation (By similarity).</text>
</comment>
<comment type="subcellular location">
    <subcellularLocation>
        <location evidence="6">Secreted</location>
    </subcellularLocation>
    <subcellularLocation>
        <location evidence="1">Secreted</location>
        <location evidence="1">Extracellular space</location>
        <location evidence="1">Extracellular matrix</location>
    </subcellularLocation>
</comment>
<comment type="tissue specificity">
    <text evidence="6">Detected in thyroid (at protein level).</text>
</comment>
<comment type="induction">
    <text evidence="5 6">Up-regulated by virus infection, double-stranded DNA, IFNG and insulin. Down-regulated by hydrocortisone.</text>
</comment>
<dbReference type="EMBL" id="AF065438">
    <property type="protein sequence ID" value="AAC17177.1"/>
    <property type="molecule type" value="mRNA"/>
</dbReference>
<dbReference type="EMBL" id="AY552591">
    <property type="protein sequence ID" value="AAS58489.1"/>
    <property type="molecule type" value="mRNA"/>
</dbReference>
<dbReference type="EMBL" id="CH473948">
    <property type="protein sequence ID" value="EDM06756.1"/>
    <property type="molecule type" value="Genomic_DNA"/>
</dbReference>
<dbReference type="EMBL" id="BC081724">
    <property type="protein sequence ID" value="AAH81724.1"/>
    <property type="molecule type" value="mRNA"/>
</dbReference>
<dbReference type="RefSeq" id="NP_620796.2">
    <property type="nucleotide sequence ID" value="NM_139096.2"/>
</dbReference>
<dbReference type="SMR" id="O70513"/>
<dbReference type="BioGRID" id="251451">
    <property type="interactions" value="1"/>
</dbReference>
<dbReference type="FunCoup" id="O70513">
    <property type="interactions" value="175"/>
</dbReference>
<dbReference type="IntAct" id="O70513">
    <property type="interactions" value="1"/>
</dbReference>
<dbReference type="STRING" id="10116.ENSRNOP00000004320"/>
<dbReference type="GlyCosmos" id="O70513">
    <property type="glycosylation" value="8 sites, No reported glycans"/>
</dbReference>
<dbReference type="GlyGen" id="O70513">
    <property type="glycosylation" value="8 sites"/>
</dbReference>
<dbReference type="PhosphoSitePlus" id="O70513"/>
<dbReference type="jPOST" id="O70513"/>
<dbReference type="PaxDb" id="10116-ENSRNOP00000004320"/>
<dbReference type="GeneID" id="245955"/>
<dbReference type="KEGG" id="rno:245955"/>
<dbReference type="UCSC" id="RGD:620837">
    <property type="organism name" value="rat"/>
</dbReference>
<dbReference type="AGR" id="RGD:620837"/>
<dbReference type="CTD" id="3959"/>
<dbReference type="RGD" id="620837">
    <property type="gene designation" value="Lgals3bp"/>
</dbReference>
<dbReference type="VEuPathDB" id="HostDB:ENSRNOG00000003217"/>
<dbReference type="eggNOG" id="ENOG502QU48">
    <property type="taxonomic scope" value="Eukaryota"/>
</dbReference>
<dbReference type="HOGENOM" id="CLU_032646_0_0_1"/>
<dbReference type="InParanoid" id="O70513"/>
<dbReference type="PhylomeDB" id="O70513"/>
<dbReference type="TreeFam" id="TF331368"/>
<dbReference type="Reactome" id="R-RNO-114608">
    <property type="pathway name" value="Platelet degranulation"/>
</dbReference>
<dbReference type="PRO" id="PR:O70513"/>
<dbReference type="Proteomes" id="UP000002494">
    <property type="component" value="Chromosome 10"/>
</dbReference>
<dbReference type="Proteomes" id="UP000234681">
    <property type="component" value="Chromosome 10"/>
</dbReference>
<dbReference type="Bgee" id="ENSRNOG00000003217">
    <property type="expression patterns" value="Expressed in ovary and 19 other cell types or tissues"/>
</dbReference>
<dbReference type="GO" id="GO:0005615">
    <property type="term" value="C:extracellular space"/>
    <property type="evidence" value="ECO:0000266"/>
    <property type="project" value="RGD"/>
</dbReference>
<dbReference type="GO" id="GO:0016020">
    <property type="term" value="C:membrane"/>
    <property type="evidence" value="ECO:0007669"/>
    <property type="project" value="InterPro"/>
</dbReference>
<dbReference type="GO" id="GO:0007155">
    <property type="term" value="P:cell adhesion"/>
    <property type="evidence" value="ECO:0007669"/>
    <property type="project" value="UniProtKB-KW"/>
</dbReference>
<dbReference type="FunFam" id="3.30.710.10:FF:000128">
    <property type="entry name" value="galectin-3-binding protein precursor"/>
    <property type="match status" value="1"/>
</dbReference>
<dbReference type="FunFam" id="3.10.250.10:FF:000005">
    <property type="entry name" value="Neurotrypsin isoform A"/>
    <property type="match status" value="1"/>
</dbReference>
<dbReference type="Gene3D" id="1.25.40.420">
    <property type="match status" value="1"/>
</dbReference>
<dbReference type="Gene3D" id="3.30.710.10">
    <property type="entry name" value="Potassium Channel Kv1.1, Chain A"/>
    <property type="match status" value="1"/>
</dbReference>
<dbReference type="Gene3D" id="3.10.250.10">
    <property type="entry name" value="SRCR-like domain"/>
    <property type="match status" value="1"/>
</dbReference>
<dbReference type="InterPro" id="IPR011705">
    <property type="entry name" value="BACK"/>
</dbReference>
<dbReference type="InterPro" id="IPR051481">
    <property type="entry name" value="BTB-POZ/Galectin-3-binding"/>
</dbReference>
<dbReference type="InterPro" id="IPR000210">
    <property type="entry name" value="BTB/POZ_dom"/>
</dbReference>
<dbReference type="InterPro" id="IPR011333">
    <property type="entry name" value="SKP1/BTB/POZ_sf"/>
</dbReference>
<dbReference type="InterPro" id="IPR001190">
    <property type="entry name" value="SRCR"/>
</dbReference>
<dbReference type="InterPro" id="IPR036772">
    <property type="entry name" value="SRCR-like_dom_sf"/>
</dbReference>
<dbReference type="PANTHER" id="PTHR24410:SF16">
    <property type="entry name" value="GALECTIN-3-BINDING PROTEIN"/>
    <property type="match status" value="1"/>
</dbReference>
<dbReference type="PANTHER" id="PTHR24410">
    <property type="entry name" value="HL07962P-RELATED"/>
    <property type="match status" value="1"/>
</dbReference>
<dbReference type="Pfam" id="PF07707">
    <property type="entry name" value="BACK"/>
    <property type="match status" value="1"/>
</dbReference>
<dbReference type="Pfam" id="PF00530">
    <property type="entry name" value="SRCR"/>
    <property type="match status" value="1"/>
</dbReference>
<dbReference type="PRINTS" id="PR00258">
    <property type="entry name" value="SPERACTRCPTR"/>
</dbReference>
<dbReference type="SMART" id="SM00875">
    <property type="entry name" value="BACK"/>
    <property type="match status" value="1"/>
</dbReference>
<dbReference type="SMART" id="SM00225">
    <property type="entry name" value="BTB"/>
    <property type="match status" value="1"/>
</dbReference>
<dbReference type="SMART" id="SM00202">
    <property type="entry name" value="SR"/>
    <property type="match status" value="1"/>
</dbReference>
<dbReference type="SUPFAM" id="SSF54695">
    <property type="entry name" value="POZ domain"/>
    <property type="match status" value="1"/>
</dbReference>
<dbReference type="SUPFAM" id="SSF56487">
    <property type="entry name" value="SRCR-like"/>
    <property type="match status" value="1"/>
</dbReference>
<dbReference type="PROSITE" id="PS50097">
    <property type="entry name" value="BTB"/>
    <property type="match status" value="1"/>
</dbReference>
<dbReference type="PROSITE" id="PS00420">
    <property type="entry name" value="SRCR_1"/>
    <property type="match status" value="1"/>
</dbReference>
<dbReference type="PROSITE" id="PS50287">
    <property type="entry name" value="SRCR_2"/>
    <property type="match status" value="1"/>
</dbReference>
<sequence length="574" mass="63742">MALLWLLSVFLLVPGTQGAKDGDMRLVNGASASEGRVEIFYRGRWGTVCDNLWNLLDAHVVCRALGYENATQALSRAAFGPGKGPIMLDEVECTGNESSLANCSSLGWMVSHCGHEKDAGVVCSNDSRGIHILDLSGELPDALGQIFDSQQDCDLFIQVTGQGHGDLSLCAHTLILRTNPEAQALWQVVGSSVIMRVDAECMPVVRDFLRYFYSRRIEVSMSSVKCLHKLASAYGATELQGYCGRLFVTLLPQDPTFHTPLELYEYAQATGDSVLEDLCVQFLAWNFEPLTQAEAWLSVPNALIQALLPKSELAVSSELDLLKAVDQWSTATGASHGDVERLVEQIRFPMMLPQELFELQFNLSLYQGHQALFQRKTMEALEFHTVPLKVLAKYRSLNLTEDVYKPRLYTSSTWSSLLMAGAWSTQSYKYRQFYTYNYGSQSRYSSYQNFQTPQHPSFLFKDKLISWSATYLPTIQSCWNYGFSCTSDELPVLGLTTSSYSDPTIGYENKALILCGGYSVVDVTTFIGSKAPIPGTQETNSSKTPSLFPCASGAFSSFRVVIRPFYLTNSTDTE</sequence>
<evidence type="ECO:0000250" key="1">
    <source>
        <dbReference type="UniProtKB" id="Q08380"/>
    </source>
</evidence>
<evidence type="ECO:0000255" key="2"/>
<evidence type="ECO:0000255" key="3">
    <source>
        <dbReference type="PROSITE-ProRule" id="PRU00037"/>
    </source>
</evidence>
<evidence type="ECO:0000255" key="4">
    <source>
        <dbReference type="PROSITE-ProRule" id="PRU00196"/>
    </source>
</evidence>
<evidence type="ECO:0000269" key="5">
    <source>
    </source>
</evidence>
<evidence type="ECO:0000269" key="6">
    <source>
    </source>
</evidence>
<evidence type="ECO:0000305" key="7"/>
<accession>O70513</accession>
<accession>Q66HR4</accession>
<accession>Q6Q8R9</accession>
<keyword id="KW-0130">Cell adhesion</keyword>
<keyword id="KW-1015">Disulfide bond</keyword>
<keyword id="KW-0272">Extracellular matrix</keyword>
<keyword id="KW-0325">Glycoprotein</keyword>
<keyword id="KW-1185">Reference proteome</keyword>
<keyword id="KW-0964">Secreted</keyword>
<keyword id="KW-0732">Signal</keyword>
<protein>
    <recommendedName>
        <fullName>Galectin-3-binding protein</fullName>
    </recommendedName>
    <alternativeName>
        <fullName>Cyp-C-associated protein</fullName>
        <shortName>CyCAP</shortName>
    </alternativeName>
    <alternativeName>
        <fullName>Lectin galactoside-binding soluble 3-binding protein</fullName>
    </alternativeName>
    <alternativeName>
        <fullName>Mac-2-binding protein</fullName>
        <shortName>MAC2BP</shortName>
        <shortName>Mac-2 BP</shortName>
    </alternativeName>
    <alternativeName>
        <fullName>Protein 90K</fullName>
    </alternativeName>
</protein>
<organism>
    <name type="scientific">Rattus norvegicus</name>
    <name type="common">Rat</name>
    <dbReference type="NCBI Taxonomy" id="10116"/>
    <lineage>
        <taxon>Eukaryota</taxon>
        <taxon>Metazoa</taxon>
        <taxon>Chordata</taxon>
        <taxon>Craniata</taxon>
        <taxon>Vertebrata</taxon>
        <taxon>Euteleostomi</taxon>
        <taxon>Mammalia</taxon>
        <taxon>Eutheria</taxon>
        <taxon>Euarchontoglires</taxon>
        <taxon>Glires</taxon>
        <taxon>Rodentia</taxon>
        <taxon>Myomorpha</taxon>
        <taxon>Muroidea</taxon>
        <taxon>Muridae</taxon>
        <taxon>Murinae</taxon>
        <taxon>Rattus</taxon>
    </lineage>
</organism>
<proteinExistence type="evidence at protein level"/>
<feature type="signal peptide" evidence="2">
    <location>
        <begin position="1"/>
        <end position="18"/>
    </location>
</feature>
<feature type="chain" id="PRO_0000357037" description="Galectin-3-binding protein">
    <location>
        <begin position="19"/>
        <end position="574"/>
    </location>
</feature>
<feature type="domain" description="SRCR" evidence="4">
    <location>
        <begin position="24"/>
        <end position="124"/>
    </location>
</feature>
<feature type="domain" description="BTB" evidence="3">
    <location>
        <begin position="153"/>
        <end position="221"/>
    </location>
</feature>
<feature type="domain" description="BACK">
    <location>
        <begin position="260"/>
        <end position="360"/>
    </location>
</feature>
<feature type="glycosylation site" description="N-linked (GlcNAc...) asparagine" evidence="2">
    <location>
        <position position="69"/>
    </location>
</feature>
<feature type="glycosylation site" description="N-linked (GlcNAc...) asparagine" evidence="2">
    <location>
        <position position="96"/>
    </location>
</feature>
<feature type="glycosylation site" description="N-linked (GlcNAc...) asparagine" evidence="2">
    <location>
        <position position="102"/>
    </location>
</feature>
<feature type="glycosylation site" description="N-linked (GlcNAc...) asparagine" evidence="2">
    <location>
        <position position="125"/>
    </location>
</feature>
<feature type="glycosylation site" description="N-linked (GlcNAc...) asparagine" evidence="2">
    <location>
        <position position="362"/>
    </location>
</feature>
<feature type="glycosylation site" description="N-linked (GlcNAc...) asparagine" evidence="2">
    <location>
        <position position="398"/>
    </location>
</feature>
<feature type="glycosylation site" description="N-linked (GlcNAc...) asparagine" evidence="2">
    <location>
        <position position="540"/>
    </location>
</feature>
<feature type="glycosylation site" description="N-linked (GlcNAc...) asparagine" evidence="2">
    <location>
        <position position="569"/>
    </location>
</feature>
<feature type="disulfide bond" evidence="4">
    <location>
        <begin position="49"/>
        <end position="113"/>
    </location>
</feature>
<feature type="disulfide bond" evidence="4">
    <location>
        <begin position="62"/>
        <end position="123"/>
    </location>
</feature>
<feature type="disulfide bond" evidence="4">
    <location>
        <begin position="93"/>
        <end position="103"/>
    </location>
</feature>
<feature type="sequence conflict" description="In Ref. 2; AAS58489." evidence="7" ref="2">
    <original>A</original>
    <variation>P</variation>
    <location>
        <position position="32"/>
    </location>
</feature>
<feature type="sequence conflict" description="In Ref. 2; AAS58489." evidence="7" ref="2">
    <original>V</original>
    <variation>L</variation>
    <location>
        <position position="48"/>
    </location>
</feature>
<feature type="sequence conflict" description="In Ref. 2; AAS58489." evidence="7" ref="2">
    <original>V</original>
    <variation>F</variation>
    <location>
        <position position="61"/>
    </location>
</feature>
<feature type="sequence conflict" description="In Ref. 2; AAS58489." evidence="7" ref="2">
    <original>E</original>
    <variation>D</variation>
    <location>
        <position position="68"/>
    </location>
</feature>
<feature type="sequence conflict" description="In Ref. 2; AAS58489." evidence="7" ref="2">
    <original>Q</original>
    <variation>P</variation>
    <location>
        <position position="72"/>
    </location>
</feature>
<feature type="sequence conflict" description="In Ref. 2; AAS58489." evidence="7" ref="2">
    <original>SRA</original>
    <variation>NRV</variation>
    <location>
        <begin position="75"/>
        <end position="77"/>
    </location>
</feature>
<feature type="sequence conflict" description="In Ref. 2; AAS58489." evidence="7" ref="2">
    <original>A</original>
    <variation>S</variation>
    <location>
        <position position="142"/>
    </location>
</feature>
<feature type="sequence conflict" description="In Ref. 2; AAS58489." evidence="7" ref="2">
    <original>A</original>
    <variation>S</variation>
    <location>
        <position position="295"/>
    </location>
</feature>
<feature type="sequence conflict" description="In Ref. 1; AAC17177." evidence="7" ref="1">
    <original>V</original>
    <variation>E</variation>
    <location>
        <position position="560"/>
    </location>
</feature>